<name>CARM1_RAT</name>
<proteinExistence type="evidence at protein level"/>
<sequence>MAAAAATAVGPGAGSAGVAGPGGAGPCATVSVFPGARLLTIGDANGEIQRHAEQQALRLEVRAGPDAAGIALYSHEDVCVFKCSVSRETECSRVGRQSFIITLGCNSVLIQFATPHDFCSFYNILKTCRGHTLERSVFSERTEESSAVQYFQFYGYLSQQQNMMQDYVRTGTYQRAILQNHTDFKDKIVLDVGCGSGILSFFAAQAGARKIYAVEASTMAQHAEVLVKSNNLTDRIVVIPGKVEEVSLPEQVDIIISEPMGYMLFNERMLESYLHAKKYLKPSGNMFPTIGDVHLAPFTDEQLYMEQFTKANFWYQPSFHGVDLSALRGAAVDEYFRQPVVDTFDIRILMAKSVKYTVNFLEAKEGDLHRIEIPFKFHMLHSGLVHGLAFWFDVAFIGSIMTVWLSTAPTEPLTHWYQVRCLFQSPLFAKAGDTLSGTCLLIANKRQSYDISIVAQVDQTGSKSSNLLDLKNPFFRYTGTTPSPPPGSHYTSPSENMWNTGSTYNLSSGVAVAGMPTAYDLSSVIAGGSSVGHNNLIPLANTGIVNHTHSRMGSIMSTGIVQGNRVAGPWAGDLPPGLRTRSSYQWGPGRLRGHAGSSVPMTCPTGSSGAQGGGGSSSAHYAVNNQFTMGGPAISMASPMSIPTNTMHYGS</sequence>
<comment type="function">
    <text evidence="1 2 6">Methylates (mono- and asymmetric dimethylation) the guanidino nitrogens of arginyl residues in several proteins involved in DNA packaging, transcription regulation, pre-mRNA splicing, and mRNA stability (PubMed:16508003). Recruited to promoters upon gene activation together with histone acetyltransferases from EP300/P300 and p160 families, methylates histone H3 at 'Arg-17' (H3R17me), forming mainly asymmetric dimethylarginine (H3R17me2a), leading to activation of transcription via chromatin remodeling (By similarity). During nuclear hormone receptor activation and TCF7L2/TCF4 activation, acts synergically with EP300/P300 and either one of the p160 histone acetyltransferases NCOA1/SRC1, NCOA2/GRIP1 and NCOA3/ACTR or CTNNB1/beta-catenin to activate transcription (By similarity). During myogenic transcriptional activation, acts together with NCOA3/ACTR as a coactivator for MEF2C (By similarity). During monocyte inflammatory stimulation, acts together with EP300/P300 as a coactivator for NF-kappa-B (By similarity). Acts as a coactivator for PPARG, promotes adipocyte differentiation and the accumulation of brown fat tissue (By similarity). Plays a role in the regulation of pre-mRNA alternative splicing by methylation of splicing factors (By similarity). Also seems to be involved in p53/TP53 transcriptional activation (By similarity). Methylates EP300/P300, both at 'Arg-2142', which may loosen its interaction with NCOA2/GRIP1, and at 'Arg-580' and 'Arg-604' in the KIX domain, which impairs its interaction with CREB and inhibits CREB-dependent transcriptional activation (By similarity). Also methylates arginine residues in RNA-binding proteins PABPC1, ELAVL1 and ELAV4, which may affect their mRNA-stabilizing properties and the half-life of their target mRNAs (PubMed:16508003). Acts as a transcriptional coactivator of ACACA/acetyl-CoA carboxylase by enriching H3R17 methylation at its promoter, thereby positively regulating fatty acid synthesis (By similarity). Independently of its methyltransferase activity, involved in replication fork progression: promotes PARP1 recruitment to replication forks, leading to poly-ADP-ribosylation of chromatin at replication forks and reduced fork speed (By similarity).</text>
</comment>
<comment type="function">
    <molecule>Isoform 3</molecule>
    <text evidence="5">Isoform 3 specifically affects pre-mRNA splicing (PubMed:15944154). This activity is independent from methyltransferase activity (PubMed:15944154).</text>
</comment>
<comment type="catalytic activity">
    <reaction evidence="2">
        <text>L-arginyl-[protein] + 2 S-adenosyl-L-methionine = N(omega),N(omega)-dimethyl-L-arginyl-[protein] + 2 S-adenosyl-L-homocysteine + 2 H(+)</text>
        <dbReference type="Rhea" id="RHEA:48096"/>
        <dbReference type="Rhea" id="RHEA-COMP:10532"/>
        <dbReference type="Rhea" id="RHEA-COMP:11991"/>
        <dbReference type="ChEBI" id="CHEBI:15378"/>
        <dbReference type="ChEBI" id="CHEBI:29965"/>
        <dbReference type="ChEBI" id="CHEBI:57856"/>
        <dbReference type="ChEBI" id="CHEBI:59789"/>
        <dbReference type="ChEBI" id="CHEBI:61897"/>
        <dbReference type="EC" id="2.1.1.319"/>
    </reaction>
</comment>
<comment type="activity regulation">
    <text evidence="2">Methylation of H3R17 (H3R17me) by CARM1 is stimulated by preacetylation of H3 'Lys-18' (H3K18ac) H3 'Lys-23' (H3K23ac) by EP300 and blocked by citrullination of H3 'Arg-17' (H3R17ci) by PADI4.</text>
</comment>
<comment type="subunit">
    <text evidence="1 2 5 7">Homodimer (PubMed:17882262). Interacts with NR1H4 (By similarity). Interacts with SNRPC (PubMed:15944154). Interacts with the C-terminus of NCOA2/GRIP1, NCO3/ACTR and NCOA1/SRC1. Part of a complex consisting of CARM1, EP300/P300 and NCOA2/GRIP1. Interacts with FLII, TP53, myogenic factor MEF2, EP300/P300, TRIM24, CREBBP and CTNNB1. Interacts with RELA. Identified in a complex containing CARM1, TRIM24 and NCOA2/GRIP1. Interacts with NCOA3/SRC3. Interacts with SKP2. Interacts (via PH domain-like fold) with C9orf72 (By similarity). Interacts with PARP1; promoting PARP1 recruimtent to replication forks (By similarity).</text>
</comment>
<comment type="subcellular location">
    <subcellularLocation>
        <location evidence="6">Nucleus</location>
    </subcellularLocation>
    <subcellularLocation>
        <location evidence="6">Cytoplasm</location>
    </subcellularLocation>
    <subcellularLocation>
        <location evidence="1">Chromosome</location>
    </subcellularLocation>
    <text evidence="1">Mainly nuclear during the G1, S and G2 phases of the cell cycle. Cytoplasmic during mitosis, after breakup of the nuclear membrane. Localizes to replication forks.</text>
</comment>
<comment type="alternative products">
    <event type="alternative splicing"/>
    <isoform>
        <id>Q4AE70-1</id>
        <name>1</name>
        <name evidence="8">CARM1-v2</name>
        <sequence type="displayed"/>
    </isoform>
    <isoform>
        <id>Q4AE70-2</id>
        <name>2</name>
        <name evidence="8">CARM1-v1</name>
        <sequence type="described" ref="VSP_020384"/>
    </isoform>
    <isoform>
        <id>Q4AE70-3</id>
        <name>3</name>
        <name evidence="8">CARM1-v3</name>
        <sequence type="described" ref="VSP_020382 VSP_020385"/>
    </isoform>
    <isoform>
        <id>Q4AE70-4</id>
        <name>4</name>
        <name evidence="8">CARM1-v4</name>
        <sequence type="described" ref="VSP_020383"/>
    </isoform>
    <text>Named isoforms=2.</text>
</comment>
<comment type="tissue specificity">
    <molecule>Isoform 1</molecule>
    <text evidence="5">Isoform 1 is expressed at low levels in brain, liver and testis.</text>
</comment>
<comment type="tissue specificity">
    <molecule>Isoform 2</molecule>
    <text evidence="5">Isoform 2 is highly expressed in brain, liver, skeletal muscle and testis.</text>
</comment>
<comment type="tissue specificity">
    <molecule>Isoform 3</molecule>
    <text evidence="5">Isoform 3 is highly expressed in spleen, liver and kidney.</text>
</comment>
<comment type="tissue specificity">
    <molecule>Isoform 4</molecule>
    <text evidence="5">Isoform 4 is expressed in spleen, liver and kidney.</text>
</comment>
<comment type="developmental stage">
    <molecule>Isoform 2</molecule>
    <text evidence="5">Expressed in fetal brain.</text>
</comment>
<comment type="developmental stage">
    <molecule>Isoform 3</molecule>
    <text evidence="5">Expressed in fetal brain.</text>
</comment>
<comment type="PTM">
    <text evidence="2">Auto-methylated on Arg-551. Methylation enhances transcription coactivator activity. Methylation is required for its role in the regulation of pre-mRNA alternative splicing (By similarity).</text>
</comment>
<comment type="PTM">
    <text evidence="1 2">Phosphorylation at Ser-217 interferes with S-adenosyl-L-methionine binding and strongly reduces methyltransferase activity. Phosphorylation at Ser-217 is strongly increased during mitosis, and decreases rapidly to a very low, basal level after entry into the G1 phase of the cell cycle. Phosphorylation at Ser-217 may promote location in the cytosol (By similarity).</text>
</comment>
<comment type="PTM">
    <text evidence="1">Ubiquitinated by E3 ubiquitin-protein ligase complex containing FBXO9 at Lys-228; leading to proteasomal degradation.</text>
</comment>
<comment type="similarity">
    <text evidence="3">Belongs to the class I-like SAM-binding methyltransferase superfamily. Protein arginine N-methyltransferase family.</text>
</comment>
<reference key="1">
    <citation type="journal article" date="2005" name="J. Biol. Chem.">
        <title>Coactivator-associated arginine methyltransferase 1, CARM1, affects pre-mRNA splicing in an isoform-specific manner.</title>
        <authorList>
            <person name="Ohkura N."/>
            <person name="Takahashi M."/>
            <person name="Yaguchi H."/>
            <person name="Nagamura Y."/>
            <person name="Tsukada T."/>
        </authorList>
    </citation>
    <scope>NUCLEOTIDE SEQUENCE [MRNA] (ISOFORMS 1; 2; 3 AND 4)</scope>
    <scope>FUNCTION (ISOFORM 3)</scope>
    <scope>TISSUE SPECIFICITY</scope>
    <scope>DEVELOPMENTAL STAGE</scope>
    <scope>INTERACTION WITH SNRPC</scope>
    <source>
        <tissue>Fetal brain</tissue>
    </source>
</reference>
<reference key="2">
    <citation type="journal article" date="2006" name="Mol. Cell. Biol.">
        <title>CARM1 regulates proliferation of PC12 cells by methylating HuD.</title>
        <authorList>
            <person name="Fujiwara T."/>
            <person name="Mori Y."/>
            <person name="Chu D.L."/>
            <person name="Koyama Y."/>
            <person name="Miyata S."/>
            <person name="Tanaka H."/>
            <person name="Yachi K."/>
            <person name="Kubo T."/>
            <person name="Yoshikawa H."/>
            <person name="Tohyama M."/>
        </authorList>
    </citation>
    <scope>FUNCTION IN METHYLATION OF ELAV4</scope>
    <scope>SUBCELLULAR LOCATION</scope>
</reference>
<reference key="3">
    <citation type="journal article" date="2007" name="EMBO J.">
        <title>Functional insights from structures of coactivator-associated arginine methyltransferase 1 domains.</title>
        <authorList>
            <person name="Troffer-Charlier N."/>
            <person name="Cura V."/>
            <person name="Hassenboehler P."/>
            <person name="Moras D."/>
            <person name="Cavarelli J."/>
        </authorList>
    </citation>
    <scope>X-RAY CRYSTALLOGRAPHY (2.55 ANGSTROMS) OF 28-507 IN COMPLEX WITH S-ADENOSYL-L-HOMOCYSTEINE</scope>
    <scope>SUBUNIT</scope>
    <scope>IDENTIFICATION BY MASS SPECTROMETRY</scope>
</reference>
<evidence type="ECO:0000250" key="1">
    <source>
        <dbReference type="UniProtKB" id="Q86X55"/>
    </source>
</evidence>
<evidence type="ECO:0000250" key="2">
    <source>
        <dbReference type="UniProtKB" id="Q9WVG6"/>
    </source>
</evidence>
<evidence type="ECO:0000255" key="3">
    <source>
        <dbReference type="PROSITE-ProRule" id="PRU01015"/>
    </source>
</evidence>
<evidence type="ECO:0000256" key="4">
    <source>
        <dbReference type="SAM" id="MobiDB-lite"/>
    </source>
</evidence>
<evidence type="ECO:0000269" key="5">
    <source>
    </source>
</evidence>
<evidence type="ECO:0000269" key="6">
    <source>
    </source>
</evidence>
<evidence type="ECO:0000269" key="7">
    <source>
    </source>
</evidence>
<evidence type="ECO:0000303" key="8">
    <source>
    </source>
</evidence>
<evidence type="ECO:0000305" key="9">
    <source>
    </source>
</evidence>
<evidence type="ECO:0007829" key="10">
    <source>
        <dbReference type="PDB" id="2OQB"/>
    </source>
</evidence>
<evidence type="ECO:0007829" key="11">
    <source>
        <dbReference type="PDB" id="3B3F"/>
    </source>
</evidence>
<evidence type="ECO:0007829" key="12">
    <source>
        <dbReference type="PDB" id="3B3G"/>
    </source>
</evidence>
<evidence type="ECO:0007829" key="13">
    <source>
        <dbReference type="PDB" id="3B3J"/>
    </source>
</evidence>
<protein>
    <recommendedName>
        <fullName>Histone-arginine methyltransferase CARM1</fullName>
        <ecNumber evidence="2">2.1.1.319</ecNumber>
    </recommendedName>
    <alternativeName>
        <fullName>Coactivator-associated arginine methyltransferase 1</fullName>
    </alternativeName>
    <alternativeName>
        <fullName>Protein arginine N-methyltransferase 4</fullName>
    </alternativeName>
</protein>
<gene>
    <name type="primary">Carm1</name>
    <name type="synonym">Prmt4</name>
</gene>
<dbReference type="EC" id="2.1.1.319" evidence="2"/>
<dbReference type="EMBL" id="AB201114">
    <property type="protein sequence ID" value="BAE16333.1"/>
    <property type="molecule type" value="mRNA"/>
</dbReference>
<dbReference type="EMBL" id="AB201115">
    <property type="protein sequence ID" value="BAE16334.1"/>
    <property type="molecule type" value="mRNA"/>
</dbReference>
<dbReference type="EMBL" id="AB201116">
    <property type="protein sequence ID" value="BAE16335.1"/>
    <property type="molecule type" value="mRNA"/>
</dbReference>
<dbReference type="EMBL" id="AB201117">
    <property type="protein sequence ID" value="BAE16336.1"/>
    <property type="molecule type" value="mRNA"/>
</dbReference>
<dbReference type="RefSeq" id="NP_001025212.1">
    <molecule id="Q4AE70-2"/>
    <property type="nucleotide sequence ID" value="NM_001030041.4"/>
</dbReference>
<dbReference type="RefSeq" id="NP_001029260.1">
    <molecule id="Q4AE70-4"/>
    <property type="nucleotide sequence ID" value="NM_001034088.3"/>
</dbReference>
<dbReference type="PDB" id="2OQB">
    <property type="method" value="X-ray"/>
    <property type="resolution" value="1.69 A"/>
    <property type="chains" value="A/B=28-140"/>
</dbReference>
<dbReference type="PDB" id="3B3F">
    <property type="method" value="X-ray"/>
    <property type="resolution" value="2.20 A"/>
    <property type="chains" value="A/B/C/D=140-480"/>
</dbReference>
<dbReference type="PDB" id="3B3G">
    <property type="method" value="X-ray"/>
    <property type="resolution" value="2.40 A"/>
    <property type="chains" value="A/B=140-480"/>
</dbReference>
<dbReference type="PDB" id="3B3J">
    <property type="method" value="X-ray"/>
    <property type="resolution" value="2.55 A"/>
    <property type="chains" value="A=28-507"/>
</dbReference>
<dbReference type="PDBsum" id="2OQB"/>
<dbReference type="PDBsum" id="3B3F"/>
<dbReference type="PDBsum" id="3B3G"/>
<dbReference type="PDBsum" id="3B3J"/>
<dbReference type="SMR" id="Q4AE70"/>
<dbReference type="FunCoup" id="Q4AE70">
    <property type="interactions" value="2481"/>
</dbReference>
<dbReference type="IntAct" id="Q4AE70">
    <property type="interactions" value="1"/>
</dbReference>
<dbReference type="STRING" id="10116.ENSRNOP00000042739"/>
<dbReference type="CarbonylDB" id="Q4AE70"/>
<dbReference type="GlyGen" id="Q4AE70">
    <property type="glycosylation" value="1 site, 1 O-linked glycan (1 site)"/>
</dbReference>
<dbReference type="PhosphoSitePlus" id="Q4AE70"/>
<dbReference type="PaxDb" id="10116-ENSRNOP00000042739"/>
<dbReference type="Ensembl" id="ENSRNOT00000041577.5">
    <molecule id="Q4AE70-1"/>
    <property type="protein sequence ID" value="ENSRNOP00000049428.5"/>
    <property type="gene ID" value="ENSRNOG00000031129.7"/>
</dbReference>
<dbReference type="Ensembl" id="ENSRNOT00000048245.7">
    <molecule id="Q4AE70-2"/>
    <property type="protein sequence ID" value="ENSRNOP00000042739.3"/>
    <property type="gene ID" value="ENSRNOG00000031129.7"/>
</dbReference>
<dbReference type="GeneID" id="363026"/>
<dbReference type="KEGG" id="rno:363026"/>
<dbReference type="UCSC" id="RGD:1305879">
    <molecule id="Q4AE70-1"/>
    <property type="organism name" value="rat"/>
</dbReference>
<dbReference type="AGR" id="RGD:1305879"/>
<dbReference type="CTD" id="10498"/>
<dbReference type="RGD" id="1305879">
    <property type="gene designation" value="Carm1"/>
</dbReference>
<dbReference type="GeneTree" id="ENSGT00940000160377"/>
<dbReference type="HOGENOM" id="CLU_017375_0_1_1"/>
<dbReference type="InParanoid" id="Q4AE70"/>
<dbReference type="OMA" id="QFATPNX"/>
<dbReference type="OrthoDB" id="7848332at2759"/>
<dbReference type="PhylomeDB" id="Q4AE70"/>
<dbReference type="TreeFam" id="TF323332"/>
<dbReference type="Reactome" id="R-RNO-3214858">
    <property type="pathway name" value="RMTs methylate histone arginines"/>
</dbReference>
<dbReference type="Reactome" id="R-RNO-400206">
    <property type="pathway name" value="Regulation of lipid metabolism by PPARalpha"/>
</dbReference>
<dbReference type="Reactome" id="R-RNO-9018519">
    <property type="pathway name" value="Estrogen-dependent gene expression"/>
</dbReference>
<dbReference type="Reactome" id="R-RNO-9707564">
    <property type="pathway name" value="Cytoprotection by HMOX1"/>
</dbReference>
<dbReference type="EvolutionaryTrace" id="Q4AE70"/>
<dbReference type="PRO" id="PR:Q4AE70"/>
<dbReference type="Proteomes" id="UP000002494">
    <property type="component" value="Chromosome 8"/>
</dbReference>
<dbReference type="Bgee" id="ENSRNOG00000031129">
    <property type="expression patterns" value="Expressed in skeletal muscle tissue and 19 other cell types or tissues"/>
</dbReference>
<dbReference type="GO" id="GO:0005737">
    <property type="term" value="C:cytoplasm"/>
    <property type="evidence" value="ECO:0000266"/>
    <property type="project" value="RGD"/>
</dbReference>
<dbReference type="GO" id="GO:0005829">
    <property type="term" value="C:cytosol"/>
    <property type="evidence" value="ECO:0000250"/>
    <property type="project" value="UniProtKB"/>
</dbReference>
<dbReference type="GO" id="GO:0043596">
    <property type="term" value="C:nuclear replication fork"/>
    <property type="evidence" value="ECO:0000250"/>
    <property type="project" value="UniProtKB"/>
</dbReference>
<dbReference type="GO" id="GO:0005654">
    <property type="term" value="C:nucleoplasm"/>
    <property type="evidence" value="ECO:0007669"/>
    <property type="project" value="Ensembl"/>
</dbReference>
<dbReference type="GO" id="GO:0005634">
    <property type="term" value="C:nucleus"/>
    <property type="evidence" value="ECO:0000266"/>
    <property type="project" value="RGD"/>
</dbReference>
<dbReference type="GO" id="GO:0032991">
    <property type="term" value="C:protein-containing complex"/>
    <property type="evidence" value="ECO:0000266"/>
    <property type="project" value="RGD"/>
</dbReference>
<dbReference type="GO" id="GO:0090575">
    <property type="term" value="C:RNA polymerase II transcription regulator complex"/>
    <property type="evidence" value="ECO:0000266"/>
    <property type="project" value="RGD"/>
</dbReference>
<dbReference type="GO" id="GO:0140297">
    <property type="term" value="F:DNA-binding transcription factor binding"/>
    <property type="evidence" value="ECO:0000266"/>
    <property type="project" value="RGD"/>
</dbReference>
<dbReference type="GO" id="GO:0008469">
    <property type="term" value="F:histone arginine N-methyltransferase activity"/>
    <property type="evidence" value="ECO:0000266"/>
    <property type="project" value="RGD"/>
</dbReference>
<dbReference type="GO" id="GO:0035642">
    <property type="term" value="F:histone H3R17 methyltransferase activity"/>
    <property type="evidence" value="ECO:0000250"/>
    <property type="project" value="UniProtKB"/>
</dbReference>
<dbReference type="GO" id="GO:0070611">
    <property type="term" value="F:histone H3R2 methyltransferase activity"/>
    <property type="evidence" value="ECO:0000250"/>
    <property type="project" value="UniProtKB"/>
</dbReference>
<dbReference type="GO" id="GO:0140903">
    <property type="term" value="F:histone H3R26 methyltransferase activity"/>
    <property type="evidence" value="ECO:0000250"/>
    <property type="project" value="UniProtKB"/>
</dbReference>
<dbReference type="GO" id="GO:0042054">
    <property type="term" value="F:histone methyltransferase activity"/>
    <property type="evidence" value="ECO:0000250"/>
    <property type="project" value="UniProtKB"/>
</dbReference>
<dbReference type="GO" id="GO:0070577">
    <property type="term" value="F:lysine-acetylated histone binding"/>
    <property type="evidence" value="ECO:0000266"/>
    <property type="project" value="RGD"/>
</dbReference>
<dbReference type="GO" id="GO:0042803">
    <property type="term" value="F:protein homodimerization activity"/>
    <property type="evidence" value="ECO:0000266"/>
    <property type="project" value="RGD"/>
</dbReference>
<dbReference type="GO" id="GO:0008276">
    <property type="term" value="F:protein methyltransferase activity"/>
    <property type="evidence" value="ECO:0000266"/>
    <property type="project" value="RGD"/>
</dbReference>
<dbReference type="GO" id="GO:0016274">
    <property type="term" value="F:protein-arginine N-methyltransferase activity"/>
    <property type="evidence" value="ECO:0000250"/>
    <property type="project" value="UniProtKB"/>
</dbReference>
<dbReference type="GO" id="GO:0035242">
    <property type="term" value="F:protein-arginine omega-N asymmetric methyltransferase activity"/>
    <property type="evidence" value="ECO:0000250"/>
    <property type="project" value="UniProtKB"/>
</dbReference>
<dbReference type="GO" id="GO:0000976">
    <property type="term" value="F:transcription cis-regulatory region binding"/>
    <property type="evidence" value="ECO:0000250"/>
    <property type="project" value="UniProtKB"/>
</dbReference>
<dbReference type="GO" id="GO:0003713">
    <property type="term" value="F:transcription coactivator activity"/>
    <property type="evidence" value="ECO:0000250"/>
    <property type="project" value="UniProtKB"/>
</dbReference>
<dbReference type="GO" id="GO:0008283">
    <property type="term" value="P:cell population proliferation"/>
    <property type="evidence" value="ECO:0000266"/>
    <property type="project" value="RGD"/>
</dbReference>
<dbReference type="GO" id="GO:0006338">
    <property type="term" value="P:chromatin remodeling"/>
    <property type="evidence" value="ECO:0000318"/>
    <property type="project" value="GO_Central"/>
</dbReference>
<dbReference type="GO" id="GO:0060350">
    <property type="term" value="P:endochondral bone morphogenesis"/>
    <property type="evidence" value="ECO:0000266"/>
    <property type="project" value="RGD"/>
</dbReference>
<dbReference type="GO" id="GO:0030520">
    <property type="term" value="P:estrogen receptor signaling pathway"/>
    <property type="evidence" value="ECO:0000266"/>
    <property type="project" value="RGD"/>
</dbReference>
<dbReference type="GO" id="GO:0032259">
    <property type="term" value="P:methylation"/>
    <property type="evidence" value="ECO:0007669"/>
    <property type="project" value="UniProtKB-KW"/>
</dbReference>
<dbReference type="GO" id="GO:0006397">
    <property type="term" value="P:mRNA processing"/>
    <property type="evidence" value="ECO:0007669"/>
    <property type="project" value="UniProtKB-KW"/>
</dbReference>
<dbReference type="GO" id="GO:2000171">
    <property type="term" value="P:negative regulation of dendrite development"/>
    <property type="evidence" value="ECO:0000315"/>
    <property type="project" value="RGD"/>
</dbReference>
<dbReference type="GO" id="GO:0030518">
    <property type="term" value="P:nuclear receptor-mediated steroid hormone signaling pathway"/>
    <property type="evidence" value="ECO:0000266"/>
    <property type="project" value="RGD"/>
</dbReference>
<dbReference type="GO" id="GO:0008284">
    <property type="term" value="P:positive regulation of cell population proliferation"/>
    <property type="evidence" value="ECO:0000315"/>
    <property type="project" value="RGD"/>
</dbReference>
<dbReference type="GO" id="GO:1904037">
    <property type="term" value="P:positive regulation of epithelial cell apoptotic process"/>
    <property type="evidence" value="ECO:0000266"/>
    <property type="project" value="RGD"/>
</dbReference>
<dbReference type="GO" id="GO:0045600">
    <property type="term" value="P:positive regulation of fat cell differentiation"/>
    <property type="evidence" value="ECO:0000250"/>
    <property type="project" value="UniProtKB"/>
</dbReference>
<dbReference type="GO" id="GO:0045943">
    <property type="term" value="P:positive regulation of transcription by RNA polymerase I"/>
    <property type="evidence" value="ECO:0000266"/>
    <property type="project" value="RGD"/>
</dbReference>
<dbReference type="GO" id="GO:0045944">
    <property type="term" value="P:positive regulation of transcription by RNA polymerase II"/>
    <property type="evidence" value="ECO:0000266"/>
    <property type="project" value="RGD"/>
</dbReference>
<dbReference type="GO" id="GO:0071168">
    <property type="term" value="P:protein localization to chromatin"/>
    <property type="evidence" value="ECO:0000266"/>
    <property type="project" value="RGD"/>
</dbReference>
<dbReference type="GO" id="GO:0006355">
    <property type="term" value="P:regulation of DNA-templated transcription"/>
    <property type="evidence" value="ECO:0000266"/>
    <property type="project" value="RGD"/>
</dbReference>
<dbReference type="GO" id="GO:0003420">
    <property type="term" value="P:regulation of growth plate cartilage chondrocyte proliferation"/>
    <property type="evidence" value="ECO:0000266"/>
    <property type="project" value="RGD"/>
</dbReference>
<dbReference type="GO" id="GO:0033146">
    <property type="term" value="P:regulation of intracellular estrogen receptor signaling pathway"/>
    <property type="evidence" value="ECO:0000250"/>
    <property type="project" value="UniProtKB"/>
</dbReference>
<dbReference type="GO" id="GO:0071932">
    <property type="term" value="P:replication fork reversal"/>
    <property type="evidence" value="ECO:0000250"/>
    <property type="project" value="UniProtKB"/>
</dbReference>
<dbReference type="GO" id="GO:0051591">
    <property type="term" value="P:response to cAMP"/>
    <property type="evidence" value="ECO:0000314"/>
    <property type="project" value="RGD"/>
</dbReference>
<dbReference type="GO" id="GO:0008380">
    <property type="term" value="P:RNA splicing"/>
    <property type="evidence" value="ECO:0007669"/>
    <property type="project" value="UniProtKB-KW"/>
</dbReference>
<dbReference type="CDD" id="cd02440">
    <property type="entry name" value="AdoMet_MTases"/>
    <property type="match status" value="1"/>
</dbReference>
<dbReference type="CDD" id="cd13330">
    <property type="entry name" value="PH_CARM1"/>
    <property type="match status" value="1"/>
</dbReference>
<dbReference type="FunFam" id="2.30.29.30:FF:000235">
    <property type="entry name" value="Coactivator-associated arginine methyltransferase 1"/>
    <property type="match status" value="1"/>
</dbReference>
<dbReference type="FunFam" id="2.70.160.11:FF:000002">
    <property type="entry name" value="Probable histone-arginine methyltransferase CARM1"/>
    <property type="match status" value="1"/>
</dbReference>
<dbReference type="FunFam" id="3.40.50.150:FF:000031">
    <property type="entry name" value="Putative Histone-arginine methyltransferase CARM1"/>
    <property type="match status" value="1"/>
</dbReference>
<dbReference type="Gene3D" id="2.70.160.11">
    <property type="entry name" value="Hnrnp arginine n-methyltransferase1"/>
    <property type="match status" value="1"/>
</dbReference>
<dbReference type="Gene3D" id="2.30.29.30">
    <property type="entry name" value="Pleckstrin-homology domain (PH domain)/Phosphotyrosine-binding domain (PTB)"/>
    <property type="match status" value="1"/>
</dbReference>
<dbReference type="Gene3D" id="3.40.50.150">
    <property type="entry name" value="Vaccinia Virus protein VP39"/>
    <property type="match status" value="1"/>
</dbReference>
<dbReference type="InterPro" id="IPR025799">
    <property type="entry name" value="Arg_MeTrfase"/>
</dbReference>
<dbReference type="InterPro" id="IPR020989">
    <property type="entry name" value="Histone-Arg_MeTrfase_N"/>
</dbReference>
<dbReference type="InterPro" id="IPR011993">
    <property type="entry name" value="PH-like_dom_sf"/>
</dbReference>
<dbReference type="InterPro" id="IPR055135">
    <property type="entry name" value="PRMT_dom"/>
</dbReference>
<dbReference type="InterPro" id="IPR029063">
    <property type="entry name" value="SAM-dependent_MTases_sf"/>
</dbReference>
<dbReference type="PANTHER" id="PTHR11006:SF51">
    <property type="entry name" value="HISTONE-ARGININE METHYLTRANSFERASE CARM1"/>
    <property type="match status" value="1"/>
</dbReference>
<dbReference type="PANTHER" id="PTHR11006">
    <property type="entry name" value="PROTEIN ARGININE N-METHYLTRANSFERASE"/>
    <property type="match status" value="1"/>
</dbReference>
<dbReference type="Pfam" id="PF11531">
    <property type="entry name" value="CARM1"/>
    <property type="match status" value="1"/>
</dbReference>
<dbReference type="Pfam" id="PF06325">
    <property type="entry name" value="PrmA"/>
    <property type="match status" value="1"/>
</dbReference>
<dbReference type="Pfam" id="PF22528">
    <property type="entry name" value="PRMT_C"/>
    <property type="match status" value="1"/>
</dbReference>
<dbReference type="SUPFAM" id="SSF53335">
    <property type="entry name" value="S-adenosyl-L-methionine-dependent methyltransferases"/>
    <property type="match status" value="1"/>
</dbReference>
<dbReference type="PROSITE" id="PS51678">
    <property type="entry name" value="SAM_MT_PRMT"/>
    <property type="match status" value="1"/>
</dbReference>
<feature type="chain" id="PRO_0000249250" description="Histone-arginine methyltransferase CARM1">
    <location>
        <begin position="1"/>
        <end position="651"/>
    </location>
</feature>
<feature type="domain" description="SAM-dependent MTase PRMT-type" evidence="3">
    <location>
        <begin position="147"/>
        <end position="454"/>
    </location>
</feature>
<feature type="region of interest" description="Interaction with C9orf72" evidence="2">
    <location>
        <begin position="28"/>
        <end position="139"/>
    </location>
</feature>
<feature type="region of interest" description="Required for nuclear translocation" evidence="2">
    <location>
        <begin position="347"/>
        <end position="380"/>
    </location>
</feature>
<feature type="region of interest" description="Transactivation domain" evidence="2">
    <location>
        <begin position="500"/>
        <end position="651"/>
    </location>
</feature>
<feature type="region of interest" description="Disordered" evidence="4">
    <location>
        <begin position="581"/>
        <end position="617"/>
    </location>
</feature>
<feature type="binding site" evidence="9">
    <location>
        <position position="160"/>
    </location>
    <ligand>
        <name>S-adenosyl-L-methionine</name>
        <dbReference type="ChEBI" id="CHEBI:59789"/>
    </ligand>
</feature>
<feature type="binding site" evidence="9">
    <location>
        <position position="169"/>
    </location>
    <ligand>
        <name>S-adenosyl-L-methionine</name>
        <dbReference type="ChEBI" id="CHEBI:59789"/>
    </ligand>
</feature>
<feature type="binding site" evidence="9">
    <location>
        <position position="193"/>
    </location>
    <ligand>
        <name>S-adenosyl-L-methionine</name>
        <dbReference type="ChEBI" id="CHEBI:59789"/>
    </ligand>
</feature>
<feature type="binding site" evidence="9">
    <location>
        <position position="215"/>
    </location>
    <ligand>
        <name>S-adenosyl-L-methionine</name>
        <dbReference type="ChEBI" id="CHEBI:59789"/>
    </ligand>
</feature>
<feature type="binding site" evidence="9">
    <location>
        <position position="244"/>
    </location>
    <ligand>
        <name>S-adenosyl-L-methionine</name>
        <dbReference type="ChEBI" id="CHEBI:59789"/>
    </ligand>
</feature>
<feature type="binding site" evidence="9">
    <location>
        <position position="272"/>
    </location>
    <ligand>
        <name>S-adenosyl-L-methionine</name>
        <dbReference type="ChEBI" id="CHEBI:59789"/>
    </ligand>
</feature>
<feature type="modified residue" description="Phosphoserine" evidence="1">
    <location>
        <position position="217"/>
    </location>
</feature>
<feature type="modified residue" description="Dimethylated arginine" evidence="2">
    <location>
        <position position="551"/>
    </location>
</feature>
<feature type="cross-link" description="Glycyl lysine isopeptide (Lys-Gly) (interchain with G-Cter in ubiquitin)" evidence="1">
    <location>
        <position position="228"/>
    </location>
</feature>
<feature type="splice variant" id="VSP_020382" description="In isoform 3." evidence="8">
    <original>ANTGIVNHTHSRMGSIMSTGIVQGNRVAGPWAGDLPPGLRTRSSYQWGPGRLRGHAGSSVPMTCPTGSSGAQGGGGSSSAHYAVNNQFTMGGPAISMASPMSIP</original>
    <variation>GECPLGSMACQGRTGICQWPAKPVLGSLPPLSLS</variation>
    <location>
        <begin position="540"/>
        <end position="643"/>
    </location>
</feature>
<feature type="splice variant" id="VSP_020383" description="In isoform 4." evidence="8">
    <location>
        <begin position="540"/>
        <end position="605"/>
    </location>
</feature>
<feature type="splice variant" id="VSP_020384" description="In isoform 2." evidence="8">
    <location>
        <begin position="564"/>
        <end position="606"/>
    </location>
</feature>
<feature type="splice variant" id="VSP_020385" description="In isoform 3." evidence="8">
    <location>
        <begin position="644"/>
        <end position="651"/>
    </location>
</feature>
<feature type="strand" evidence="10">
    <location>
        <begin position="31"/>
        <end position="42"/>
    </location>
</feature>
<feature type="strand" evidence="10">
    <location>
        <begin position="49"/>
        <end position="63"/>
    </location>
</feature>
<feature type="strand" evidence="10">
    <location>
        <begin position="65"/>
        <end position="73"/>
    </location>
</feature>
<feature type="strand" evidence="10">
    <location>
        <begin position="79"/>
        <end position="86"/>
    </location>
</feature>
<feature type="strand" evidence="10">
    <location>
        <begin position="89"/>
        <end position="94"/>
    </location>
</feature>
<feature type="turn" evidence="10">
    <location>
        <begin position="95"/>
        <end position="97"/>
    </location>
</feature>
<feature type="strand" evidence="10">
    <location>
        <begin position="98"/>
        <end position="103"/>
    </location>
</feature>
<feature type="strand" evidence="10">
    <location>
        <begin position="106"/>
        <end position="111"/>
    </location>
</feature>
<feature type="helix" evidence="10">
    <location>
        <begin position="115"/>
        <end position="128"/>
    </location>
</feature>
<feature type="helix" evidence="11">
    <location>
        <begin position="143"/>
        <end position="154"/>
    </location>
</feature>
<feature type="helix" evidence="11">
    <location>
        <begin position="157"/>
        <end position="165"/>
    </location>
</feature>
<feature type="helix" evidence="11">
    <location>
        <begin position="167"/>
        <end position="179"/>
    </location>
</feature>
<feature type="helix" evidence="11">
    <location>
        <begin position="180"/>
        <end position="183"/>
    </location>
</feature>
<feature type="turn" evidence="11">
    <location>
        <begin position="184"/>
        <end position="186"/>
    </location>
</feature>
<feature type="strand" evidence="11">
    <location>
        <begin position="188"/>
        <end position="193"/>
    </location>
</feature>
<feature type="strand" evidence="12">
    <location>
        <begin position="195"/>
        <end position="197"/>
    </location>
</feature>
<feature type="helix" evidence="11">
    <location>
        <begin position="198"/>
        <end position="205"/>
    </location>
</feature>
<feature type="strand" evidence="11">
    <location>
        <begin position="209"/>
        <end position="215"/>
    </location>
</feature>
<feature type="helix" evidence="11">
    <location>
        <begin position="219"/>
        <end position="229"/>
    </location>
</feature>
<feature type="turn" evidence="11">
    <location>
        <begin position="233"/>
        <end position="235"/>
    </location>
</feature>
<feature type="strand" evidence="11">
    <location>
        <begin position="236"/>
        <end position="241"/>
    </location>
</feature>
<feature type="turn" evidence="11">
    <location>
        <begin position="243"/>
        <end position="245"/>
    </location>
</feature>
<feature type="strand" evidence="11">
    <location>
        <begin position="252"/>
        <end position="257"/>
    </location>
</feature>
<feature type="helix" evidence="13">
    <location>
        <begin position="261"/>
        <end position="264"/>
    </location>
</feature>
<feature type="turn" evidence="11">
    <location>
        <begin position="265"/>
        <end position="267"/>
    </location>
</feature>
<feature type="helix" evidence="11">
    <location>
        <begin position="269"/>
        <end position="275"/>
    </location>
</feature>
<feature type="helix" evidence="11">
    <location>
        <begin position="276"/>
        <end position="279"/>
    </location>
</feature>
<feature type="strand" evidence="11">
    <location>
        <begin position="280"/>
        <end position="288"/>
    </location>
</feature>
<feature type="strand" evidence="11">
    <location>
        <begin position="290"/>
        <end position="298"/>
    </location>
</feature>
<feature type="helix" evidence="11">
    <location>
        <begin position="301"/>
        <end position="311"/>
    </location>
</feature>
<feature type="helix" evidence="11">
    <location>
        <begin position="312"/>
        <end position="314"/>
    </location>
</feature>
<feature type="helix" evidence="11">
    <location>
        <begin position="325"/>
        <end position="327"/>
    </location>
</feature>
<feature type="helix" evidence="11">
    <location>
        <begin position="328"/>
        <end position="336"/>
    </location>
</feature>
<feature type="strand" evidence="11">
    <location>
        <begin position="340"/>
        <end position="342"/>
    </location>
</feature>
<feature type="helix" evidence="11">
    <location>
        <begin position="346"/>
        <end position="348"/>
    </location>
</feature>
<feature type="strand" evidence="11">
    <location>
        <begin position="354"/>
        <end position="359"/>
    </location>
</feature>
<feature type="turn" evidence="11">
    <location>
        <begin position="360"/>
        <end position="362"/>
    </location>
</feature>
<feature type="helix" evidence="11">
    <location>
        <begin position="365"/>
        <end position="368"/>
    </location>
</feature>
<feature type="strand" evidence="11">
    <location>
        <begin position="369"/>
        <end position="378"/>
    </location>
</feature>
<feature type="strand" evidence="11">
    <location>
        <begin position="383"/>
        <end position="397"/>
    </location>
</feature>
<feature type="strand" evidence="11">
    <location>
        <begin position="402"/>
        <end position="406"/>
    </location>
</feature>
<feature type="strand" evidence="13">
    <location>
        <begin position="410"/>
        <end position="412"/>
    </location>
</feature>
<feature type="strand" evidence="11">
    <location>
        <begin position="418"/>
        <end position="429"/>
    </location>
</feature>
<feature type="strand" evidence="11">
    <location>
        <begin position="434"/>
        <end position="444"/>
    </location>
</feature>
<feature type="turn" evidence="11">
    <location>
        <begin position="445"/>
        <end position="447"/>
    </location>
</feature>
<feature type="strand" evidence="11">
    <location>
        <begin position="448"/>
        <end position="457"/>
    </location>
</feature>
<feature type="turn" evidence="11">
    <location>
        <begin position="458"/>
        <end position="460"/>
    </location>
</feature>
<feature type="strand" evidence="11">
    <location>
        <begin position="463"/>
        <end position="469"/>
    </location>
</feature>
<feature type="strand" evidence="13">
    <location>
        <begin position="474"/>
        <end position="477"/>
    </location>
</feature>
<keyword id="KW-0002">3D-structure</keyword>
<keyword id="KW-0025">Alternative splicing</keyword>
<keyword id="KW-0156">Chromatin regulator</keyword>
<keyword id="KW-0158">Chromosome</keyword>
<keyword id="KW-0963">Cytoplasm</keyword>
<keyword id="KW-1017">Isopeptide bond</keyword>
<keyword id="KW-0488">Methylation</keyword>
<keyword id="KW-0489">Methyltransferase</keyword>
<keyword id="KW-0507">mRNA processing</keyword>
<keyword id="KW-0508">mRNA splicing</keyword>
<keyword id="KW-0539">Nucleus</keyword>
<keyword id="KW-0597">Phosphoprotein</keyword>
<keyword id="KW-1185">Reference proteome</keyword>
<keyword id="KW-0949">S-adenosyl-L-methionine</keyword>
<keyword id="KW-0804">Transcription</keyword>
<keyword id="KW-0805">Transcription regulation</keyword>
<keyword id="KW-0808">Transferase</keyword>
<keyword id="KW-0832">Ubl conjugation</keyword>
<organism>
    <name type="scientific">Rattus norvegicus</name>
    <name type="common">Rat</name>
    <dbReference type="NCBI Taxonomy" id="10116"/>
    <lineage>
        <taxon>Eukaryota</taxon>
        <taxon>Metazoa</taxon>
        <taxon>Chordata</taxon>
        <taxon>Craniata</taxon>
        <taxon>Vertebrata</taxon>
        <taxon>Euteleostomi</taxon>
        <taxon>Mammalia</taxon>
        <taxon>Eutheria</taxon>
        <taxon>Euarchontoglires</taxon>
        <taxon>Glires</taxon>
        <taxon>Rodentia</taxon>
        <taxon>Myomorpha</taxon>
        <taxon>Muroidea</taxon>
        <taxon>Muridae</taxon>
        <taxon>Murinae</taxon>
        <taxon>Rattus</taxon>
    </lineage>
</organism>
<accession>Q4AE70</accession>
<accession>Q4AE68</accession>
<accession>Q4AE69</accession>
<accession>Q4AE71</accession>